<dbReference type="EC" id="6.1.1.7" evidence="1"/>
<dbReference type="EMBL" id="AE017143">
    <property type="protein sequence ID" value="AAP96235.1"/>
    <property type="molecule type" value="Genomic_DNA"/>
</dbReference>
<dbReference type="EMBL" id="AF297520">
    <property type="protein sequence ID" value="AAG23689.1"/>
    <property type="status" value="ALT_INIT"/>
    <property type="molecule type" value="Genomic_DNA"/>
</dbReference>
<dbReference type="RefSeq" id="WP_010945284.1">
    <property type="nucleotide sequence ID" value="NC_002940.2"/>
</dbReference>
<dbReference type="SMR" id="Q7VLK0"/>
<dbReference type="STRING" id="233412.HD_1429"/>
<dbReference type="KEGG" id="hdu:HD_1429"/>
<dbReference type="eggNOG" id="COG0013">
    <property type="taxonomic scope" value="Bacteria"/>
</dbReference>
<dbReference type="HOGENOM" id="CLU_004485_1_1_6"/>
<dbReference type="OrthoDB" id="9803884at2"/>
<dbReference type="Proteomes" id="UP000001022">
    <property type="component" value="Chromosome"/>
</dbReference>
<dbReference type="GO" id="GO:0005829">
    <property type="term" value="C:cytosol"/>
    <property type="evidence" value="ECO:0007669"/>
    <property type="project" value="TreeGrafter"/>
</dbReference>
<dbReference type="GO" id="GO:0004813">
    <property type="term" value="F:alanine-tRNA ligase activity"/>
    <property type="evidence" value="ECO:0007669"/>
    <property type="project" value="UniProtKB-UniRule"/>
</dbReference>
<dbReference type="GO" id="GO:0002161">
    <property type="term" value="F:aminoacyl-tRNA deacylase activity"/>
    <property type="evidence" value="ECO:0007669"/>
    <property type="project" value="TreeGrafter"/>
</dbReference>
<dbReference type="GO" id="GO:0005524">
    <property type="term" value="F:ATP binding"/>
    <property type="evidence" value="ECO:0007669"/>
    <property type="project" value="UniProtKB-UniRule"/>
</dbReference>
<dbReference type="GO" id="GO:0000049">
    <property type="term" value="F:tRNA binding"/>
    <property type="evidence" value="ECO:0007669"/>
    <property type="project" value="UniProtKB-KW"/>
</dbReference>
<dbReference type="GO" id="GO:0008270">
    <property type="term" value="F:zinc ion binding"/>
    <property type="evidence" value="ECO:0007669"/>
    <property type="project" value="UniProtKB-UniRule"/>
</dbReference>
<dbReference type="GO" id="GO:0006419">
    <property type="term" value="P:alanyl-tRNA aminoacylation"/>
    <property type="evidence" value="ECO:0007669"/>
    <property type="project" value="UniProtKB-UniRule"/>
</dbReference>
<dbReference type="GO" id="GO:0045892">
    <property type="term" value="P:negative regulation of DNA-templated transcription"/>
    <property type="evidence" value="ECO:0007669"/>
    <property type="project" value="TreeGrafter"/>
</dbReference>
<dbReference type="CDD" id="cd00673">
    <property type="entry name" value="AlaRS_core"/>
    <property type="match status" value="1"/>
</dbReference>
<dbReference type="FunFam" id="2.40.30.130:FF:000001">
    <property type="entry name" value="Alanine--tRNA ligase"/>
    <property type="match status" value="1"/>
</dbReference>
<dbReference type="FunFam" id="3.10.310.40:FF:000001">
    <property type="entry name" value="Alanine--tRNA ligase"/>
    <property type="match status" value="1"/>
</dbReference>
<dbReference type="FunFam" id="3.30.54.20:FF:000001">
    <property type="entry name" value="Alanine--tRNA ligase"/>
    <property type="match status" value="1"/>
</dbReference>
<dbReference type="FunFam" id="3.30.930.10:FF:000004">
    <property type="entry name" value="Alanine--tRNA ligase"/>
    <property type="match status" value="1"/>
</dbReference>
<dbReference type="FunFam" id="3.30.980.10:FF:000004">
    <property type="entry name" value="Alanine--tRNA ligase, cytoplasmic"/>
    <property type="match status" value="1"/>
</dbReference>
<dbReference type="Gene3D" id="2.40.30.130">
    <property type="match status" value="1"/>
</dbReference>
<dbReference type="Gene3D" id="3.10.310.40">
    <property type="match status" value="1"/>
</dbReference>
<dbReference type="Gene3D" id="3.30.54.20">
    <property type="match status" value="1"/>
</dbReference>
<dbReference type="Gene3D" id="6.10.250.550">
    <property type="match status" value="1"/>
</dbReference>
<dbReference type="Gene3D" id="3.30.930.10">
    <property type="entry name" value="Bira Bifunctional Protein, Domain 2"/>
    <property type="match status" value="1"/>
</dbReference>
<dbReference type="Gene3D" id="3.30.980.10">
    <property type="entry name" value="Threonyl-trna Synthetase, Chain A, domain 2"/>
    <property type="match status" value="1"/>
</dbReference>
<dbReference type="HAMAP" id="MF_00036_B">
    <property type="entry name" value="Ala_tRNA_synth_B"/>
    <property type="match status" value="1"/>
</dbReference>
<dbReference type="InterPro" id="IPR045864">
    <property type="entry name" value="aa-tRNA-synth_II/BPL/LPL"/>
</dbReference>
<dbReference type="InterPro" id="IPR002318">
    <property type="entry name" value="Ala-tRNA-lgiase_IIc"/>
</dbReference>
<dbReference type="InterPro" id="IPR018162">
    <property type="entry name" value="Ala-tRNA-ligase_IIc_anticod-bd"/>
</dbReference>
<dbReference type="InterPro" id="IPR018165">
    <property type="entry name" value="Ala-tRNA-synth_IIc_core"/>
</dbReference>
<dbReference type="InterPro" id="IPR018164">
    <property type="entry name" value="Ala-tRNA-synth_IIc_N"/>
</dbReference>
<dbReference type="InterPro" id="IPR050058">
    <property type="entry name" value="Ala-tRNA_ligase"/>
</dbReference>
<dbReference type="InterPro" id="IPR023033">
    <property type="entry name" value="Ala_tRNA_ligase_euk/bac"/>
</dbReference>
<dbReference type="InterPro" id="IPR003156">
    <property type="entry name" value="DHHA1_dom"/>
</dbReference>
<dbReference type="InterPro" id="IPR018163">
    <property type="entry name" value="Thr/Ala-tRNA-synth_IIc_edit"/>
</dbReference>
<dbReference type="InterPro" id="IPR009000">
    <property type="entry name" value="Transl_B-barrel_sf"/>
</dbReference>
<dbReference type="InterPro" id="IPR012947">
    <property type="entry name" value="tRNA_SAD"/>
</dbReference>
<dbReference type="NCBIfam" id="TIGR00344">
    <property type="entry name" value="alaS"/>
    <property type="match status" value="1"/>
</dbReference>
<dbReference type="PANTHER" id="PTHR11777:SF9">
    <property type="entry name" value="ALANINE--TRNA LIGASE, CYTOPLASMIC"/>
    <property type="match status" value="1"/>
</dbReference>
<dbReference type="PANTHER" id="PTHR11777">
    <property type="entry name" value="ALANYL-TRNA SYNTHETASE"/>
    <property type="match status" value="1"/>
</dbReference>
<dbReference type="Pfam" id="PF02272">
    <property type="entry name" value="DHHA1"/>
    <property type="match status" value="1"/>
</dbReference>
<dbReference type="Pfam" id="PF01411">
    <property type="entry name" value="tRNA-synt_2c"/>
    <property type="match status" value="1"/>
</dbReference>
<dbReference type="Pfam" id="PF07973">
    <property type="entry name" value="tRNA_SAD"/>
    <property type="match status" value="1"/>
</dbReference>
<dbReference type="PRINTS" id="PR00980">
    <property type="entry name" value="TRNASYNTHALA"/>
</dbReference>
<dbReference type="SMART" id="SM00863">
    <property type="entry name" value="tRNA_SAD"/>
    <property type="match status" value="1"/>
</dbReference>
<dbReference type="SUPFAM" id="SSF55681">
    <property type="entry name" value="Class II aaRS and biotin synthetases"/>
    <property type="match status" value="1"/>
</dbReference>
<dbReference type="SUPFAM" id="SSF101353">
    <property type="entry name" value="Putative anticodon-binding domain of alanyl-tRNA synthetase (AlaRS)"/>
    <property type="match status" value="1"/>
</dbReference>
<dbReference type="SUPFAM" id="SSF55186">
    <property type="entry name" value="ThrRS/AlaRS common domain"/>
    <property type="match status" value="1"/>
</dbReference>
<dbReference type="SUPFAM" id="SSF50447">
    <property type="entry name" value="Translation proteins"/>
    <property type="match status" value="1"/>
</dbReference>
<dbReference type="PROSITE" id="PS50860">
    <property type="entry name" value="AA_TRNA_LIGASE_II_ALA"/>
    <property type="match status" value="1"/>
</dbReference>
<sequence length="874" mass="96611">MKTTSEIRQSFLDFFNSKGHTVVPSSALVPENDPTLLFTNAGMNQFKDVFLGLEKRPYTRATTAQRCVRAGGKHNDLENVGYTARHHTFFEMMGNFSFGDYFKHDAIQFAWEFLTSEKWLHLPKEKLYVTVYETDDEAYDIWHKTVGVPSEHIIRIGDNKGVPYASDNFWAMGDTGPCGPCTEIFYDHGESFWGGLPGTAEEDGDRYIEVWNIVFMQFNRQADGTLAKLPKPSVDTGMGLERMTAVMQHVNSNYETDIFQTLIKEVATLLHVADLDNKSLRVIADHIRACSYLIVDGVIPSNEGRGYVLRRIIRRAVRHGNLLGAKEAFFYKLVPTLAKVMGQAGEILTDKQSYIQKTLKTEEEQFARTLERGLALLEEALTKVENQTLSGEVAFKLYDTYGFPLDLTADVCRERDIVIDEASFEIEMTAQRERAKSSSNFGADYNSVIKVEAETAFIGYDCFNAEAKVIALFSNGQAVDKVQSGESAVVVLDKTPFYAEMGGQVGDSGLITTAFCQFAVADTQKYGQVFGHIGQVVSGSLAIGDIISAQVDIARRQAITANHSATHLLHSALRQVLGEHVVQKGSLVSENVLRFDFSQSQAVSKAQLEEIERIVNRQIRQNLAVTIETMDIETAKEKGTVALFGEKYGDVVRVVGMTDFSIELCGGTHVKHTGEIGLFKLISESAVAAGIRRVEALTAENAINWLHNQQKIIHQSAELLKTDSLSLVDKIYQLQDKIKRNEKELQHFKDKLAAQAGAELAKQVVQINGINVVIQKLEGIESKSLRTMVDDLKNQLSSVIVVFGSVSADKVNLIVGVTKDLSNKVNAGELVGLIAQQVGGKGGGRPDMAMAGGTEPQHLDTALAFAKQWIHSKL</sequence>
<organism>
    <name type="scientific">Haemophilus ducreyi (strain 35000HP / ATCC 700724)</name>
    <dbReference type="NCBI Taxonomy" id="233412"/>
    <lineage>
        <taxon>Bacteria</taxon>
        <taxon>Pseudomonadati</taxon>
        <taxon>Pseudomonadota</taxon>
        <taxon>Gammaproteobacteria</taxon>
        <taxon>Pasteurellales</taxon>
        <taxon>Pasteurellaceae</taxon>
        <taxon>Haemophilus</taxon>
    </lineage>
</organism>
<proteinExistence type="inferred from homology"/>
<evidence type="ECO:0000255" key="1">
    <source>
        <dbReference type="HAMAP-Rule" id="MF_00036"/>
    </source>
</evidence>
<evidence type="ECO:0000305" key="2"/>
<accession>Q7VLK0</accession>
<accession>Q9F666</accession>
<keyword id="KW-0030">Aminoacyl-tRNA synthetase</keyword>
<keyword id="KW-0067">ATP-binding</keyword>
<keyword id="KW-0963">Cytoplasm</keyword>
<keyword id="KW-0436">Ligase</keyword>
<keyword id="KW-0479">Metal-binding</keyword>
<keyword id="KW-0547">Nucleotide-binding</keyword>
<keyword id="KW-0648">Protein biosynthesis</keyword>
<keyword id="KW-1185">Reference proteome</keyword>
<keyword id="KW-0694">RNA-binding</keyword>
<keyword id="KW-0820">tRNA-binding</keyword>
<keyword id="KW-0862">Zinc</keyword>
<name>SYA_HAEDU</name>
<gene>
    <name evidence="1" type="primary">alaS</name>
    <name type="ordered locus">HD_1429</name>
</gene>
<comment type="function">
    <text evidence="1">Catalyzes the attachment of alanine to tRNA(Ala) in a two-step reaction: alanine is first activated by ATP to form Ala-AMP and then transferred to the acceptor end of tRNA(Ala). Also edits incorrectly charged Ser-tRNA(Ala) and Gly-tRNA(Ala) via its editing domain.</text>
</comment>
<comment type="catalytic activity">
    <reaction evidence="1">
        <text>tRNA(Ala) + L-alanine + ATP = L-alanyl-tRNA(Ala) + AMP + diphosphate</text>
        <dbReference type="Rhea" id="RHEA:12540"/>
        <dbReference type="Rhea" id="RHEA-COMP:9657"/>
        <dbReference type="Rhea" id="RHEA-COMP:9923"/>
        <dbReference type="ChEBI" id="CHEBI:30616"/>
        <dbReference type="ChEBI" id="CHEBI:33019"/>
        <dbReference type="ChEBI" id="CHEBI:57972"/>
        <dbReference type="ChEBI" id="CHEBI:78442"/>
        <dbReference type="ChEBI" id="CHEBI:78497"/>
        <dbReference type="ChEBI" id="CHEBI:456215"/>
        <dbReference type="EC" id="6.1.1.7"/>
    </reaction>
</comment>
<comment type="cofactor">
    <cofactor evidence="1">
        <name>Zn(2+)</name>
        <dbReference type="ChEBI" id="CHEBI:29105"/>
    </cofactor>
    <text evidence="1">Binds 1 zinc ion per subunit.</text>
</comment>
<comment type="subcellular location">
    <subcellularLocation>
        <location evidence="1">Cytoplasm</location>
    </subcellularLocation>
</comment>
<comment type="domain">
    <text evidence="1">Consists of three domains; the N-terminal catalytic domain, the editing domain and the C-terminal C-Ala domain. The editing domain removes incorrectly charged amino acids, while the C-Ala domain, along with tRNA(Ala), serves as a bridge to cooperatively bring together the editing and aminoacylation centers thus stimulating deacylation of misacylated tRNAs.</text>
</comment>
<comment type="similarity">
    <text evidence="1">Belongs to the class-II aminoacyl-tRNA synthetase family.</text>
</comment>
<comment type="sequence caution" evidence="2">
    <conflict type="erroneous initiation">
        <sequence resource="EMBL-CDS" id="AAG23689"/>
    </conflict>
</comment>
<reference key="1">
    <citation type="submission" date="2003-06" db="EMBL/GenBank/DDBJ databases">
        <title>The complete genome sequence of Haemophilus ducreyi.</title>
        <authorList>
            <person name="Munson R.S. Jr."/>
            <person name="Ray W.C."/>
            <person name="Mahairas G."/>
            <person name="Sabo P."/>
            <person name="Mungur R."/>
            <person name="Johnson L."/>
            <person name="Nguyen D."/>
            <person name="Wang J."/>
            <person name="Forst C."/>
            <person name="Hood L."/>
        </authorList>
    </citation>
    <scope>NUCLEOTIDE SEQUENCE [LARGE SCALE GENOMIC DNA]</scope>
    <source>
        <strain>35000HP / ATCC 700724</strain>
    </source>
</reference>
<reference key="2">
    <citation type="submission" date="2000-08" db="EMBL/GenBank/DDBJ databases">
        <title>Haemophilus ducreyi strain Hd9 strain produces a truncated lipooligosaccharide due to a mutation in UDP-glucose pyrophosphorylase (galU).</title>
        <authorList>
            <person name="Sun S."/>
            <person name="Gibson B.W."/>
            <person name="Campagnari A.A."/>
            <person name="Munson R.S. Jr."/>
        </authorList>
    </citation>
    <scope>NUCLEOTIDE SEQUENCE [GENOMIC DNA] OF 76-874</scope>
</reference>
<protein>
    <recommendedName>
        <fullName evidence="1">Alanine--tRNA ligase</fullName>
        <ecNumber evidence="1">6.1.1.7</ecNumber>
    </recommendedName>
    <alternativeName>
        <fullName evidence="1">Alanyl-tRNA synthetase</fullName>
        <shortName evidence="1">AlaRS</shortName>
    </alternativeName>
</protein>
<feature type="chain" id="PRO_0000075121" description="Alanine--tRNA ligase">
    <location>
        <begin position="1"/>
        <end position="874"/>
    </location>
</feature>
<feature type="binding site" evidence="1">
    <location>
        <position position="563"/>
    </location>
    <ligand>
        <name>Zn(2+)</name>
        <dbReference type="ChEBI" id="CHEBI:29105"/>
    </ligand>
</feature>
<feature type="binding site" evidence="1">
    <location>
        <position position="567"/>
    </location>
    <ligand>
        <name>Zn(2+)</name>
        <dbReference type="ChEBI" id="CHEBI:29105"/>
    </ligand>
</feature>
<feature type="binding site" evidence="1">
    <location>
        <position position="665"/>
    </location>
    <ligand>
        <name>Zn(2+)</name>
        <dbReference type="ChEBI" id="CHEBI:29105"/>
    </ligand>
</feature>
<feature type="binding site" evidence="1">
    <location>
        <position position="669"/>
    </location>
    <ligand>
        <name>Zn(2+)</name>
        <dbReference type="ChEBI" id="CHEBI:29105"/>
    </ligand>
</feature>